<reference key="1">
    <citation type="journal article" date="2004" name="J. Bacteriol.">
        <title>Complete genome sequence of Rickettsia typhi and comparison with sequences of other Rickettsiae.</title>
        <authorList>
            <person name="McLeod M.P."/>
            <person name="Qin X."/>
            <person name="Karpathy S.E."/>
            <person name="Gioia J."/>
            <person name="Highlander S.K."/>
            <person name="Fox G.E."/>
            <person name="McNeill T.Z."/>
            <person name="Jiang H."/>
            <person name="Muzny D."/>
            <person name="Jacob L.S."/>
            <person name="Hawes A.C."/>
            <person name="Sodergren E."/>
            <person name="Gill R."/>
            <person name="Hume J."/>
            <person name="Morgan M."/>
            <person name="Fan G."/>
            <person name="Amin A.G."/>
            <person name="Gibbs R.A."/>
            <person name="Hong C."/>
            <person name="Yu X.-J."/>
            <person name="Walker D.H."/>
            <person name="Weinstock G.M."/>
        </authorList>
    </citation>
    <scope>NUCLEOTIDE SEQUENCE [LARGE SCALE GENOMIC DNA]</scope>
    <source>
        <strain>ATCC VR-144 / Wilmington</strain>
    </source>
</reference>
<evidence type="ECO:0000255" key="1">
    <source>
        <dbReference type="HAMAP-Rule" id="MF_00480"/>
    </source>
</evidence>
<evidence type="ECO:0000305" key="2"/>
<comment type="function">
    <text evidence="1">One of the primary rRNA binding proteins, it binds directly to 16S rRNA where it nucleates assembly of the head domain of the 30S subunit. Is located at the subunit interface close to the decoding center, probably blocks exit of the E-site tRNA.</text>
</comment>
<comment type="subunit">
    <text evidence="1">Part of the 30S ribosomal subunit. Contacts proteins S9 and S11.</text>
</comment>
<comment type="similarity">
    <text evidence="1">Belongs to the universal ribosomal protein uS7 family.</text>
</comment>
<protein>
    <recommendedName>
        <fullName evidence="1">Small ribosomal subunit protein uS7</fullName>
    </recommendedName>
    <alternativeName>
        <fullName evidence="2">30S ribosomal protein S7</fullName>
    </alternativeName>
</protein>
<feature type="chain" id="PRO_0000124333" description="Small ribosomal subunit protein uS7">
    <location>
        <begin position="1"/>
        <end position="160"/>
    </location>
</feature>
<dbReference type="EMBL" id="AE017197">
    <property type="protein sequence ID" value="AAU03606.1"/>
    <property type="molecule type" value="Genomic_DNA"/>
</dbReference>
<dbReference type="RefSeq" id="WP_011190593.1">
    <property type="nucleotide sequence ID" value="NC_006142.1"/>
</dbReference>
<dbReference type="SMR" id="Q68XN6"/>
<dbReference type="KEGG" id="rty:RT0120"/>
<dbReference type="eggNOG" id="COG0049">
    <property type="taxonomic scope" value="Bacteria"/>
</dbReference>
<dbReference type="HOGENOM" id="CLU_072226_1_1_5"/>
<dbReference type="OrthoDB" id="9807653at2"/>
<dbReference type="Proteomes" id="UP000000604">
    <property type="component" value="Chromosome"/>
</dbReference>
<dbReference type="GO" id="GO:0015935">
    <property type="term" value="C:small ribosomal subunit"/>
    <property type="evidence" value="ECO:0007669"/>
    <property type="project" value="InterPro"/>
</dbReference>
<dbReference type="GO" id="GO:0019843">
    <property type="term" value="F:rRNA binding"/>
    <property type="evidence" value="ECO:0007669"/>
    <property type="project" value="UniProtKB-UniRule"/>
</dbReference>
<dbReference type="GO" id="GO:0003735">
    <property type="term" value="F:structural constituent of ribosome"/>
    <property type="evidence" value="ECO:0007669"/>
    <property type="project" value="InterPro"/>
</dbReference>
<dbReference type="GO" id="GO:0000049">
    <property type="term" value="F:tRNA binding"/>
    <property type="evidence" value="ECO:0007669"/>
    <property type="project" value="UniProtKB-UniRule"/>
</dbReference>
<dbReference type="GO" id="GO:0006412">
    <property type="term" value="P:translation"/>
    <property type="evidence" value="ECO:0007669"/>
    <property type="project" value="UniProtKB-UniRule"/>
</dbReference>
<dbReference type="CDD" id="cd14869">
    <property type="entry name" value="uS7_Bacteria"/>
    <property type="match status" value="1"/>
</dbReference>
<dbReference type="FunFam" id="1.10.455.10:FF:000001">
    <property type="entry name" value="30S ribosomal protein S7"/>
    <property type="match status" value="1"/>
</dbReference>
<dbReference type="Gene3D" id="1.10.455.10">
    <property type="entry name" value="Ribosomal protein S7 domain"/>
    <property type="match status" value="1"/>
</dbReference>
<dbReference type="HAMAP" id="MF_00480_B">
    <property type="entry name" value="Ribosomal_uS7_B"/>
    <property type="match status" value="1"/>
</dbReference>
<dbReference type="InterPro" id="IPR000235">
    <property type="entry name" value="Ribosomal_uS7"/>
</dbReference>
<dbReference type="InterPro" id="IPR005717">
    <property type="entry name" value="Ribosomal_uS7_bac/org-type"/>
</dbReference>
<dbReference type="InterPro" id="IPR020606">
    <property type="entry name" value="Ribosomal_uS7_CS"/>
</dbReference>
<dbReference type="InterPro" id="IPR023798">
    <property type="entry name" value="Ribosomal_uS7_dom"/>
</dbReference>
<dbReference type="InterPro" id="IPR036823">
    <property type="entry name" value="Ribosomal_uS7_dom_sf"/>
</dbReference>
<dbReference type="NCBIfam" id="TIGR01029">
    <property type="entry name" value="rpsG_bact"/>
    <property type="match status" value="1"/>
</dbReference>
<dbReference type="PANTHER" id="PTHR11205">
    <property type="entry name" value="RIBOSOMAL PROTEIN S7"/>
    <property type="match status" value="1"/>
</dbReference>
<dbReference type="Pfam" id="PF00177">
    <property type="entry name" value="Ribosomal_S7"/>
    <property type="match status" value="1"/>
</dbReference>
<dbReference type="PIRSF" id="PIRSF002122">
    <property type="entry name" value="RPS7p_RPS7a_RPS5e_RPS7o"/>
    <property type="match status" value="1"/>
</dbReference>
<dbReference type="SUPFAM" id="SSF47973">
    <property type="entry name" value="Ribosomal protein S7"/>
    <property type="match status" value="1"/>
</dbReference>
<dbReference type="PROSITE" id="PS00052">
    <property type="entry name" value="RIBOSOMAL_S7"/>
    <property type="match status" value="1"/>
</dbReference>
<accession>Q68XN6</accession>
<keyword id="KW-0687">Ribonucleoprotein</keyword>
<keyword id="KW-0689">Ribosomal protein</keyword>
<keyword id="KW-0694">RNA-binding</keyword>
<keyword id="KW-0699">rRNA-binding</keyword>
<keyword id="KW-0820">tRNA-binding</keyword>
<name>RS7_RICTY</name>
<organism>
    <name type="scientific">Rickettsia typhi (strain ATCC VR-144 / Wilmington)</name>
    <dbReference type="NCBI Taxonomy" id="257363"/>
    <lineage>
        <taxon>Bacteria</taxon>
        <taxon>Pseudomonadati</taxon>
        <taxon>Pseudomonadota</taxon>
        <taxon>Alphaproteobacteria</taxon>
        <taxon>Rickettsiales</taxon>
        <taxon>Rickettsiaceae</taxon>
        <taxon>Rickettsieae</taxon>
        <taxon>Rickettsia</taxon>
        <taxon>typhus group</taxon>
    </lineage>
</organism>
<sequence>MSRRHVAEKRIILPDMKYNSILLSRFINNIMKAGKKAVAEKIVYSAFNKIEKKHSVDPYQTFNNAMHNVKPHLEVTSVRVGGANYQVPTHVDERRGYALASRWIINAASKRSEKMMIDKLAEELFEAANNRGVAIKKKEDIHKMAEANKAFSHFSPKKMK</sequence>
<proteinExistence type="inferred from homology"/>
<gene>
    <name evidence="1" type="primary">rpsG</name>
    <name type="ordered locus">RT0120</name>
</gene>